<comment type="function">
    <text evidence="1">This protein is one of the two subunits of integration host factor, a specific DNA-binding protein that functions in genetic recombination as well as in transcriptional and translational control.</text>
</comment>
<comment type="subunit">
    <text evidence="1">Heterodimer of an alpha and a beta chain.</text>
</comment>
<comment type="similarity">
    <text evidence="1">Belongs to the bacterial histone-like protein family.</text>
</comment>
<evidence type="ECO:0000255" key="1">
    <source>
        <dbReference type="HAMAP-Rule" id="MF_00380"/>
    </source>
</evidence>
<evidence type="ECO:0000256" key="2">
    <source>
        <dbReference type="SAM" id="MobiDB-lite"/>
    </source>
</evidence>
<accession>A1U2B7</accession>
<keyword id="KW-0233">DNA recombination</keyword>
<keyword id="KW-0238">DNA-binding</keyword>
<keyword id="KW-0804">Transcription</keyword>
<keyword id="KW-0805">Transcription regulation</keyword>
<keyword id="KW-0810">Translation regulation</keyword>
<dbReference type="EMBL" id="CP000514">
    <property type="protein sequence ID" value="ABM19136.1"/>
    <property type="molecule type" value="Genomic_DNA"/>
</dbReference>
<dbReference type="RefSeq" id="WP_011785529.1">
    <property type="nucleotide sequence ID" value="NC_008740.1"/>
</dbReference>
<dbReference type="SMR" id="A1U2B7"/>
<dbReference type="STRING" id="351348.Maqu_2055"/>
<dbReference type="GeneID" id="31820714"/>
<dbReference type="KEGG" id="maq:Maqu_2055"/>
<dbReference type="eggNOG" id="COG0776">
    <property type="taxonomic scope" value="Bacteria"/>
</dbReference>
<dbReference type="HOGENOM" id="CLU_105066_1_3_6"/>
<dbReference type="OrthoDB" id="9797747at2"/>
<dbReference type="Proteomes" id="UP000000998">
    <property type="component" value="Chromosome"/>
</dbReference>
<dbReference type="GO" id="GO:0005829">
    <property type="term" value="C:cytosol"/>
    <property type="evidence" value="ECO:0007669"/>
    <property type="project" value="TreeGrafter"/>
</dbReference>
<dbReference type="GO" id="GO:0003677">
    <property type="term" value="F:DNA binding"/>
    <property type="evidence" value="ECO:0007669"/>
    <property type="project" value="UniProtKB-UniRule"/>
</dbReference>
<dbReference type="GO" id="GO:0030527">
    <property type="term" value="F:structural constituent of chromatin"/>
    <property type="evidence" value="ECO:0007669"/>
    <property type="project" value="InterPro"/>
</dbReference>
<dbReference type="GO" id="GO:0006310">
    <property type="term" value="P:DNA recombination"/>
    <property type="evidence" value="ECO:0007669"/>
    <property type="project" value="UniProtKB-UniRule"/>
</dbReference>
<dbReference type="GO" id="GO:0009893">
    <property type="term" value="P:positive regulation of metabolic process"/>
    <property type="evidence" value="ECO:0007669"/>
    <property type="project" value="UniProtKB-ARBA"/>
</dbReference>
<dbReference type="GO" id="GO:0006355">
    <property type="term" value="P:regulation of DNA-templated transcription"/>
    <property type="evidence" value="ECO:0007669"/>
    <property type="project" value="UniProtKB-UniRule"/>
</dbReference>
<dbReference type="GO" id="GO:0006417">
    <property type="term" value="P:regulation of translation"/>
    <property type="evidence" value="ECO:0007669"/>
    <property type="project" value="UniProtKB-UniRule"/>
</dbReference>
<dbReference type="CDD" id="cd13835">
    <property type="entry name" value="IHF_A"/>
    <property type="match status" value="1"/>
</dbReference>
<dbReference type="FunFam" id="4.10.520.10:FF:000002">
    <property type="entry name" value="Integration host factor subunit alpha"/>
    <property type="match status" value="1"/>
</dbReference>
<dbReference type="Gene3D" id="4.10.520.10">
    <property type="entry name" value="IHF-like DNA-binding proteins"/>
    <property type="match status" value="1"/>
</dbReference>
<dbReference type="HAMAP" id="MF_00380">
    <property type="entry name" value="IHF_alpha"/>
    <property type="match status" value="1"/>
</dbReference>
<dbReference type="InterPro" id="IPR000119">
    <property type="entry name" value="Hist_DNA-bd"/>
</dbReference>
<dbReference type="InterPro" id="IPR020816">
    <property type="entry name" value="Histone-like_DNA-bd_CS"/>
</dbReference>
<dbReference type="InterPro" id="IPR010992">
    <property type="entry name" value="IHF-like_DNA-bd_dom_sf"/>
</dbReference>
<dbReference type="InterPro" id="IPR005684">
    <property type="entry name" value="IHF_alpha"/>
</dbReference>
<dbReference type="NCBIfam" id="TIGR00987">
    <property type="entry name" value="himA"/>
    <property type="match status" value="1"/>
</dbReference>
<dbReference type="NCBIfam" id="NF001401">
    <property type="entry name" value="PRK00285.1"/>
    <property type="match status" value="1"/>
</dbReference>
<dbReference type="PANTHER" id="PTHR33175">
    <property type="entry name" value="DNA-BINDING PROTEIN HU"/>
    <property type="match status" value="1"/>
</dbReference>
<dbReference type="PANTHER" id="PTHR33175:SF2">
    <property type="entry name" value="INTEGRATION HOST FACTOR SUBUNIT ALPHA"/>
    <property type="match status" value="1"/>
</dbReference>
<dbReference type="Pfam" id="PF00216">
    <property type="entry name" value="Bac_DNA_binding"/>
    <property type="match status" value="1"/>
</dbReference>
<dbReference type="PRINTS" id="PR01727">
    <property type="entry name" value="DNABINDINGHU"/>
</dbReference>
<dbReference type="SMART" id="SM00411">
    <property type="entry name" value="BHL"/>
    <property type="match status" value="1"/>
</dbReference>
<dbReference type="SUPFAM" id="SSF47729">
    <property type="entry name" value="IHF-like DNA-binding proteins"/>
    <property type="match status" value="1"/>
</dbReference>
<dbReference type="PROSITE" id="PS00045">
    <property type="entry name" value="HISTONE_LIKE"/>
    <property type="match status" value="1"/>
</dbReference>
<gene>
    <name evidence="1" type="primary">ihfA</name>
    <name evidence="1" type="synonym">himA</name>
    <name type="ordered locus">Maqu_2055</name>
</gene>
<protein>
    <recommendedName>
        <fullName evidence="1">Integration host factor subunit alpha</fullName>
        <shortName evidence="1">IHF-alpha</shortName>
    </recommendedName>
</protein>
<feature type="chain" id="PRO_1000060548" description="Integration host factor subunit alpha">
    <location>
        <begin position="1"/>
        <end position="100"/>
    </location>
</feature>
<feature type="region of interest" description="Disordered" evidence="2">
    <location>
        <begin position="53"/>
        <end position="72"/>
    </location>
</feature>
<reference key="1">
    <citation type="journal article" date="2011" name="Appl. Environ. Microbiol.">
        <title>Genomic potential of Marinobacter aquaeolei, a biogeochemical 'opportunitroph'.</title>
        <authorList>
            <person name="Singer E."/>
            <person name="Webb E.A."/>
            <person name="Nelson W.C."/>
            <person name="Heidelberg J.F."/>
            <person name="Ivanova N."/>
            <person name="Pati A."/>
            <person name="Edwards K.J."/>
        </authorList>
    </citation>
    <scope>NUCLEOTIDE SEQUENCE [LARGE SCALE GENOMIC DNA]</scope>
    <source>
        <strain>ATCC 700491 / DSM 11845 / VT8</strain>
    </source>
</reference>
<sequence>MAALTKADMAERLYEELGLNKREAKEMVEAFFDEIRGALSHNEQVKLSGFGNFDLRDKKQRPGRNPKTGEEIPISARRVVTFRPGQKLKQKVEAYAGTQS</sequence>
<proteinExistence type="inferred from homology"/>
<organism>
    <name type="scientific">Marinobacter nauticus (strain ATCC 700491 / DSM 11845 / VT8)</name>
    <name type="common">Marinobacter aquaeolei</name>
    <dbReference type="NCBI Taxonomy" id="351348"/>
    <lineage>
        <taxon>Bacteria</taxon>
        <taxon>Pseudomonadati</taxon>
        <taxon>Pseudomonadota</taxon>
        <taxon>Gammaproteobacteria</taxon>
        <taxon>Pseudomonadales</taxon>
        <taxon>Marinobacteraceae</taxon>
        <taxon>Marinobacter</taxon>
    </lineage>
</organism>
<name>IHFA_MARN8</name>